<reference key="1">
    <citation type="journal article" date="2006" name="Environ. Microbiol.">
        <title>Whole genome analysis of the marine Bacteroidetes'Gramella forsetii' reveals adaptations to degradation of polymeric organic matter.</title>
        <authorList>
            <person name="Bauer M."/>
            <person name="Kube M."/>
            <person name="Teeling H."/>
            <person name="Richter M."/>
            <person name="Lombardot T."/>
            <person name="Allers E."/>
            <person name="Wuerdemann C.A."/>
            <person name="Quast C."/>
            <person name="Kuhl H."/>
            <person name="Knaust F."/>
            <person name="Woebken D."/>
            <person name="Bischof K."/>
            <person name="Mussmann M."/>
            <person name="Choudhuri J.V."/>
            <person name="Meyer F."/>
            <person name="Reinhardt R."/>
            <person name="Amann R.I."/>
            <person name="Gloeckner F.O."/>
        </authorList>
    </citation>
    <scope>NUCLEOTIDE SEQUENCE [LARGE SCALE GENOMIC DNA]</scope>
    <source>
        <strain>DSM 17595 / CGMCC 1.15422 / KT0803</strain>
    </source>
</reference>
<organism>
    <name type="scientific">Christiangramia forsetii (strain DSM 17595 / CGMCC 1.15422 / KT0803)</name>
    <name type="common">Gramella forsetii</name>
    <dbReference type="NCBI Taxonomy" id="411154"/>
    <lineage>
        <taxon>Bacteria</taxon>
        <taxon>Pseudomonadati</taxon>
        <taxon>Bacteroidota</taxon>
        <taxon>Flavobacteriia</taxon>
        <taxon>Flavobacteriales</taxon>
        <taxon>Flavobacteriaceae</taxon>
        <taxon>Christiangramia</taxon>
    </lineage>
</organism>
<evidence type="ECO:0000255" key="1">
    <source>
        <dbReference type="HAMAP-Rule" id="MF_01864"/>
    </source>
</evidence>
<evidence type="ECO:0000255" key="2">
    <source>
        <dbReference type="PROSITE-ProRule" id="PRU01266"/>
    </source>
</evidence>
<sequence length="481" mass="54533">MEKIIDEKKQGNSLVLEPKAKNTRKLFIESYGCAMNFSDSEIVASILSKEGFNTTQNLEEADLVLVNTCSIREKAEQTVRKRLEKYNAVKRINPGMKVGVLGCMAERLKDKFLEEEKIVDLVVGPDAYKDLPNLINEVEEGRDAINVILSKEETYGDISPVRLQSNGVSAFVSITRGCDNMCTFCVVPFTRGRERSRDPQSIVEEVNDLAAKGYKEITLLGQNVDSYLWYGGGLKKDFKNATEIQKATATNFAALLKLVAEAQPKMRIRFSTSNPQDMTLDVIEAMAAYRNICNYIHLPVQSGSDRILKKMNRLHTREEYFTLIDNIKKMIPNCGISHDLITGFPTETEEDHQDTLSLMEYVKYDFGYMFTYSERPGTTAERKLEDDIPEETKKRRLQEIVDLQQKHSKQNTNSVIGTTVEVLIEKESKKSNKHWSGRNERNTVTVFSKENYQIGDFVKVKIHDCTSATLIGEPIGLSDNN</sequence>
<gene>
    <name evidence="1" type="primary">miaB</name>
    <name type="ordered locus">GFO_3590</name>
</gene>
<name>MIAB_CHRFK</name>
<accession>A0M7D3</accession>
<dbReference type="EC" id="2.8.4.3" evidence="1"/>
<dbReference type="EMBL" id="CU207366">
    <property type="protein sequence ID" value="CAL68528.1"/>
    <property type="molecule type" value="Genomic_DNA"/>
</dbReference>
<dbReference type="RefSeq" id="WP_011711429.1">
    <property type="nucleotide sequence ID" value="NC_008571.1"/>
</dbReference>
<dbReference type="SMR" id="A0M7D3"/>
<dbReference type="STRING" id="411154.GFO_3590"/>
<dbReference type="KEGG" id="gfo:GFO_3590"/>
<dbReference type="eggNOG" id="COG0621">
    <property type="taxonomic scope" value="Bacteria"/>
</dbReference>
<dbReference type="HOGENOM" id="CLU_018697_2_1_10"/>
<dbReference type="OrthoDB" id="9805215at2"/>
<dbReference type="Proteomes" id="UP000000755">
    <property type="component" value="Chromosome"/>
</dbReference>
<dbReference type="GO" id="GO:0005829">
    <property type="term" value="C:cytosol"/>
    <property type="evidence" value="ECO:0007669"/>
    <property type="project" value="TreeGrafter"/>
</dbReference>
<dbReference type="GO" id="GO:0051539">
    <property type="term" value="F:4 iron, 4 sulfur cluster binding"/>
    <property type="evidence" value="ECO:0007669"/>
    <property type="project" value="UniProtKB-UniRule"/>
</dbReference>
<dbReference type="GO" id="GO:0046872">
    <property type="term" value="F:metal ion binding"/>
    <property type="evidence" value="ECO:0007669"/>
    <property type="project" value="UniProtKB-KW"/>
</dbReference>
<dbReference type="GO" id="GO:0035597">
    <property type="term" value="F:N6-isopentenyladenosine methylthiotransferase activity"/>
    <property type="evidence" value="ECO:0007669"/>
    <property type="project" value="TreeGrafter"/>
</dbReference>
<dbReference type="CDD" id="cd01335">
    <property type="entry name" value="Radical_SAM"/>
    <property type="match status" value="1"/>
</dbReference>
<dbReference type="FunFam" id="3.40.50.12160:FF:000003">
    <property type="entry name" value="CDK5 regulatory subunit-associated protein 1"/>
    <property type="match status" value="1"/>
</dbReference>
<dbReference type="FunFam" id="3.80.30.20:FF:000001">
    <property type="entry name" value="tRNA-2-methylthio-N(6)-dimethylallyladenosine synthase 2"/>
    <property type="match status" value="1"/>
</dbReference>
<dbReference type="Gene3D" id="3.40.50.12160">
    <property type="entry name" value="Methylthiotransferase, N-terminal domain"/>
    <property type="match status" value="1"/>
</dbReference>
<dbReference type="Gene3D" id="2.40.50.140">
    <property type="entry name" value="Nucleic acid-binding proteins"/>
    <property type="match status" value="1"/>
</dbReference>
<dbReference type="Gene3D" id="3.80.30.20">
    <property type="entry name" value="tm_1862 like domain"/>
    <property type="match status" value="1"/>
</dbReference>
<dbReference type="HAMAP" id="MF_01864">
    <property type="entry name" value="tRNA_metthiotr_MiaB"/>
    <property type="match status" value="1"/>
</dbReference>
<dbReference type="InterPro" id="IPR006638">
    <property type="entry name" value="Elp3/MiaA/NifB-like_rSAM"/>
</dbReference>
<dbReference type="InterPro" id="IPR005839">
    <property type="entry name" value="Methylthiotransferase"/>
</dbReference>
<dbReference type="InterPro" id="IPR020612">
    <property type="entry name" value="Methylthiotransferase_CS"/>
</dbReference>
<dbReference type="InterPro" id="IPR013848">
    <property type="entry name" value="Methylthiotransferase_N"/>
</dbReference>
<dbReference type="InterPro" id="IPR038135">
    <property type="entry name" value="Methylthiotransferase_N_sf"/>
</dbReference>
<dbReference type="InterPro" id="IPR006463">
    <property type="entry name" value="MiaB_methiolase"/>
</dbReference>
<dbReference type="InterPro" id="IPR012340">
    <property type="entry name" value="NA-bd_OB-fold"/>
</dbReference>
<dbReference type="InterPro" id="IPR007197">
    <property type="entry name" value="rSAM"/>
</dbReference>
<dbReference type="InterPro" id="IPR023404">
    <property type="entry name" value="rSAM_horseshoe"/>
</dbReference>
<dbReference type="InterPro" id="IPR002792">
    <property type="entry name" value="TRAM_dom"/>
</dbReference>
<dbReference type="NCBIfam" id="TIGR01574">
    <property type="entry name" value="miaB-methiolase"/>
    <property type="match status" value="1"/>
</dbReference>
<dbReference type="NCBIfam" id="TIGR00089">
    <property type="entry name" value="MiaB/RimO family radical SAM methylthiotransferase"/>
    <property type="match status" value="1"/>
</dbReference>
<dbReference type="PANTHER" id="PTHR43020">
    <property type="entry name" value="CDK5 REGULATORY SUBUNIT-ASSOCIATED PROTEIN 1"/>
    <property type="match status" value="1"/>
</dbReference>
<dbReference type="PANTHER" id="PTHR43020:SF2">
    <property type="entry name" value="MITOCHONDRIAL TRNA METHYLTHIOTRANSFERASE CDK5RAP1"/>
    <property type="match status" value="1"/>
</dbReference>
<dbReference type="Pfam" id="PF04055">
    <property type="entry name" value="Radical_SAM"/>
    <property type="match status" value="1"/>
</dbReference>
<dbReference type="Pfam" id="PF01938">
    <property type="entry name" value="TRAM"/>
    <property type="match status" value="1"/>
</dbReference>
<dbReference type="Pfam" id="PF00919">
    <property type="entry name" value="UPF0004"/>
    <property type="match status" value="1"/>
</dbReference>
<dbReference type="SFLD" id="SFLDF00273">
    <property type="entry name" value="(dimethylallyl)adenosine_tRNA"/>
    <property type="match status" value="1"/>
</dbReference>
<dbReference type="SFLD" id="SFLDG01082">
    <property type="entry name" value="B12-binding_domain_containing"/>
    <property type="match status" value="1"/>
</dbReference>
<dbReference type="SFLD" id="SFLDF00413">
    <property type="entry name" value="CDK5RAP1"/>
    <property type="match status" value="1"/>
</dbReference>
<dbReference type="SFLD" id="SFLDS00029">
    <property type="entry name" value="Radical_SAM"/>
    <property type="match status" value="1"/>
</dbReference>
<dbReference type="SMART" id="SM00729">
    <property type="entry name" value="Elp3"/>
    <property type="match status" value="1"/>
</dbReference>
<dbReference type="SUPFAM" id="SSF102114">
    <property type="entry name" value="Radical SAM enzymes"/>
    <property type="match status" value="1"/>
</dbReference>
<dbReference type="PROSITE" id="PS51449">
    <property type="entry name" value="MTTASE_N"/>
    <property type="match status" value="1"/>
</dbReference>
<dbReference type="PROSITE" id="PS01278">
    <property type="entry name" value="MTTASE_RADICAL"/>
    <property type="match status" value="1"/>
</dbReference>
<dbReference type="PROSITE" id="PS51918">
    <property type="entry name" value="RADICAL_SAM"/>
    <property type="match status" value="1"/>
</dbReference>
<dbReference type="PROSITE" id="PS50926">
    <property type="entry name" value="TRAM"/>
    <property type="match status" value="1"/>
</dbReference>
<feature type="chain" id="PRO_0000374325" description="tRNA-2-methylthio-N(6)-dimethylallyladenosine synthase">
    <location>
        <begin position="1"/>
        <end position="481"/>
    </location>
</feature>
<feature type="domain" description="MTTase N-terminal" evidence="1">
    <location>
        <begin position="24"/>
        <end position="140"/>
    </location>
</feature>
<feature type="domain" description="Radical SAM core" evidence="2">
    <location>
        <begin position="164"/>
        <end position="410"/>
    </location>
</feature>
<feature type="domain" description="TRAM" evidence="1">
    <location>
        <begin position="413"/>
        <end position="476"/>
    </location>
</feature>
<feature type="binding site" evidence="1">
    <location>
        <position position="33"/>
    </location>
    <ligand>
        <name>[4Fe-4S] cluster</name>
        <dbReference type="ChEBI" id="CHEBI:49883"/>
        <label>1</label>
    </ligand>
</feature>
<feature type="binding site" evidence="1">
    <location>
        <position position="69"/>
    </location>
    <ligand>
        <name>[4Fe-4S] cluster</name>
        <dbReference type="ChEBI" id="CHEBI:49883"/>
        <label>1</label>
    </ligand>
</feature>
<feature type="binding site" evidence="1">
    <location>
        <position position="103"/>
    </location>
    <ligand>
        <name>[4Fe-4S] cluster</name>
        <dbReference type="ChEBI" id="CHEBI:49883"/>
        <label>1</label>
    </ligand>
</feature>
<feature type="binding site" evidence="1">
    <location>
        <position position="178"/>
    </location>
    <ligand>
        <name>[4Fe-4S] cluster</name>
        <dbReference type="ChEBI" id="CHEBI:49883"/>
        <label>2</label>
        <note>4Fe-4S-S-AdoMet</note>
    </ligand>
</feature>
<feature type="binding site" evidence="1">
    <location>
        <position position="182"/>
    </location>
    <ligand>
        <name>[4Fe-4S] cluster</name>
        <dbReference type="ChEBI" id="CHEBI:49883"/>
        <label>2</label>
        <note>4Fe-4S-S-AdoMet</note>
    </ligand>
</feature>
<feature type="binding site" evidence="1">
    <location>
        <position position="185"/>
    </location>
    <ligand>
        <name>[4Fe-4S] cluster</name>
        <dbReference type="ChEBI" id="CHEBI:49883"/>
        <label>2</label>
        <note>4Fe-4S-S-AdoMet</note>
    </ligand>
</feature>
<protein>
    <recommendedName>
        <fullName evidence="1">tRNA-2-methylthio-N(6)-dimethylallyladenosine synthase</fullName>
        <ecNumber evidence="1">2.8.4.3</ecNumber>
    </recommendedName>
    <alternativeName>
        <fullName evidence="1">(Dimethylallyl)adenosine tRNA methylthiotransferase MiaB</fullName>
    </alternativeName>
    <alternativeName>
        <fullName evidence="1">tRNA-i(6)A37 methylthiotransferase</fullName>
    </alternativeName>
</protein>
<keyword id="KW-0004">4Fe-4S</keyword>
<keyword id="KW-0963">Cytoplasm</keyword>
<keyword id="KW-0408">Iron</keyword>
<keyword id="KW-0411">Iron-sulfur</keyword>
<keyword id="KW-0479">Metal-binding</keyword>
<keyword id="KW-0949">S-adenosyl-L-methionine</keyword>
<keyword id="KW-0808">Transferase</keyword>
<keyword id="KW-0819">tRNA processing</keyword>
<proteinExistence type="inferred from homology"/>
<comment type="function">
    <text evidence="1">Catalyzes the methylthiolation of N6-(dimethylallyl)adenosine (i(6)A), leading to the formation of 2-methylthio-N6-(dimethylallyl)adenosine (ms(2)i(6)A) at position 37 in tRNAs that read codons beginning with uridine.</text>
</comment>
<comment type="catalytic activity">
    <reaction evidence="1">
        <text>N(6)-dimethylallyladenosine(37) in tRNA + (sulfur carrier)-SH + AH2 + 2 S-adenosyl-L-methionine = 2-methylsulfanyl-N(6)-dimethylallyladenosine(37) in tRNA + (sulfur carrier)-H + 5'-deoxyadenosine + L-methionine + A + S-adenosyl-L-homocysteine + 2 H(+)</text>
        <dbReference type="Rhea" id="RHEA:37067"/>
        <dbReference type="Rhea" id="RHEA-COMP:10375"/>
        <dbReference type="Rhea" id="RHEA-COMP:10376"/>
        <dbReference type="Rhea" id="RHEA-COMP:14737"/>
        <dbReference type="Rhea" id="RHEA-COMP:14739"/>
        <dbReference type="ChEBI" id="CHEBI:13193"/>
        <dbReference type="ChEBI" id="CHEBI:15378"/>
        <dbReference type="ChEBI" id="CHEBI:17319"/>
        <dbReference type="ChEBI" id="CHEBI:17499"/>
        <dbReference type="ChEBI" id="CHEBI:29917"/>
        <dbReference type="ChEBI" id="CHEBI:57844"/>
        <dbReference type="ChEBI" id="CHEBI:57856"/>
        <dbReference type="ChEBI" id="CHEBI:59789"/>
        <dbReference type="ChEBI" id="CHEBI:64428"/>
        <dbReference type="ChEBI" id="CHEBI:74415"/>
        <dbReference type="ChEBI" id="CHEBI:74417"/>
        <dbReference type="EC" id="2.8.4.3"/>
    </reaction>
</comment>
<comment type="cofactor">
    <cofactor evidence="1">
        <name>[4Fe-4S] cluster</name>
        <dbReference type="ChEBI" id="CHEBI:49883"/>
    </cofactor>
    <text evidence="1">Binds 2 [4Fe-4S] clusters. One cluster is coordinated with 3 cysteines and an exchangeable S-adenosyl-L-methionine.</text>
</comment>
<comment type="subunit">
    <text evidence="1">Monomer.</text>
</comment>
<comment type="subcellular location">
    <subcellularLocation>
        <location evidence="1">Cytoplasm</location>
    </subcellularLocation>
</comment>
<comment type="similarity">
    <text evidence="1">Belongs to the methylthiotransferase family. MiaB subfamily.</text>
</comment>